<protein>
    <recommendedName>
        <fullName>Aspartate-semialdehyde dehydrogenase</fullName>
        <shortName>ASA dehydrogenase</shortName>
        <shortName>ASADH</shortName>
        <ecNumber evidence="7">1.2.1.11</ecNumber>
    </recommendedName>
    <alternativeName>
        <fullName>Aspartate-beta-semialdehyde dehydrogenase</fullName>
    </alternativeName>
</protein>
<organism>
    <name type="scientific">Saccharomyces cerevisiae (strain ATCC 204508 / S288c)</name>
    <name type="common">Baker's yeast</name>
    <dbReference type="NCBI Taxonomy" id="559292"/>
    <lineage>
        <taxon>Eukaryota</taxon>
        <taxon>Fungi</taxon>
        <taxon>Dikarya</taxon>
        <taxon>Ascomycota</taxon>
        <taxon>Saccharomycotina</taxon>
        <taxon>Saccharomycetes</taxon>
        <taxon>Saccharomycetales</taxon>
        <taxon>Saccharomycetaceae</taxon>
        <taxon>Saccharomyces</taxon>
    </lineage>
</organism>
<comment type="function">
    <text evidence="7">Catalyzes the NADPH-dependent formation of L-aspartate 4-semialdehyde (L-ASA) by the reductive dephosphorylation of 4-phospho-L-aspartate (PubMed:4145650). Mediates the second step in the biosynthesis of amino acids that derive from aspartate (the aspartate family of amino acids), including methioinine and threonine, the latter of which is a precursor to isoleucine (PubMed:4145650).</text>
</comment>
<comment type="catalytic activity">
    <reaction evidence="7">
        <text>L-aspartate 4-semialdehyde + phosphate + NADP(+) = 4-phospho-L-aspartate + NADPH + H(+)</text>
        <dbReference type="Rhea" id="RHEA:24284"/>
        <dbReference type="ChEBI" id="CHEBI:15378"/>
        <dbReference type="ChEBI" id="CHEBI:43474"/>
        <dbReference type="ChEBI" id="CHEBI:57535"/>
        <dbReference type="ChEBI" id="CHEBI:57783"/>
        <dbReference type="ChEBI" id="CHEBI:58349"/>
        <dbReference type="ChEBI" id="CHEBI:537519"/>
        <dbReference type="EC" id="1.2.1.11"/>
    </reaction>
    <physiologicalReaction direction="right-to-left" evidence="7">
        <dbReference type="Rhea" id="RHEA:24286"/>
    </physiologicalReaction>
</comment>
<comment type="biophysicochemical properties">
    <kinetics>
        <KM evidence="7">36 uM for NADP(+) (at pH 8.5 and at 30 degrees Celsius)</KM>
    </kinetics>
</comment>
<comment type="pathway">
    <text evidence="7">Amino-acid biosynthesis; L-methionine biosynthesis via de novo pathway; L-homoserine from L-aspartate: step 2/3.</text>
</comment>
<comment type="pathway">
    <text evidence="7">Amino-acid biosynthesis; L-threonine biosynthesis; L-threonine from L-aspartate: step 2/5.</text>
</comment>
<comment type="subunit">
    <text evidence="7">Homotetramer.</text>
</comment>
<comment type="subcellular location">
    <subcellularLocation>
        <location evidence="5">Cytoplasm</location>
        <location evidence="5">Cytosol</location>
    </subcellularLocation>
    <subcellularLocation>
        <location evidence="5">Nucleus</location>
    </subcellularLocation>
</comment>
<comment type="induction">
    <text>By high concentrations of Met (general AA biosynthesis control).</text>
</comment>
<comment type="miscellaneous">
    <text evidence="6">Present with 18400 molecules/cell in log phase SD medium.</text>
</comment>
<comment type="similarity">
    <text evidence="8">Belongs to the aspartate-semialdehyde dehydrogenase family.</text>
</comment>
<feature type="chain" id="PRO_0000141400" description="Aspartate-semialdehyde dehydrogenase">
    <location>
        <begin position="1"/>
        <end position="365"/>
    </location>
</feature>
<feature type="active site" description="Acyl-thioester intermediate" evidence="3">
    <location>
        <position position="156"/>
    </location>
</feature>
<feature type="active site" description="Proton acceptor" evidence="3">
    <location>
        <position position="256"/>
    </location>
</feature>
<feature type="binding site" evidence="4">
    <location>
        <position position="13"/>
    </location>
    <ligand>
        <name>NADP(+)</name>
        <dbReference type="ChEBI" id="CHEBI:58349"/>
    </ligand>
</feature>
<feature type="binding site" evidence="4">
    <location>
        <position position="14"/>
    </location>
    <ligand>
        <name>NADP(+)</name>
        <dbReference type="ChEBI" id="CHEBI:58349"/>
    </ligand>
</feature>
<feature type="binding site" evidence="4">
    <location>
        <position position="15"/>
    </location>
    <ligand>
        <name>NADP(+)</name>
        <dbReference type="ChEBI" id="CHEBI:58349"/>
    </ligand>
</feature>
<feature type="binding site" evidence="2">
    <location>
        <position position="16"/>
    </location>
    <ligand>
        <name>NADP(+)</name>
        <dbReference type="ChEBI" id="CHEBI:58349"/>
    </ligand>
</feature>
<feature type="binding site" evidence="4">
    <location>
        <position position="38"/>
    </location>
    <ligand>
        <name>NADP(+)</name>
        <dbReference type="ChEBI" id="CHEBI:58349"/>
    </ligand>
</feature>
<feature type="binding site" evidence="4">
    <location>
        <position position="41"/>
    </location>
    <ligand>
        <name>NADP(+)</name>
        <dbReference type="ChEBI" id="CHEBI:58349"/>
    </ligand>
</feature>
<feature type="binding site" evidence="1">
    <location>
        <position position="85"/>
    </location>
    <ligand>
        <name>NADP(+)</name>
        <dbReference type="ChEBI" id="CHEBI:58349"/>
    </ligand>
</feature>
<feature type="binding site" evidence="1">
    <location>
        <position position="86"/>
    </location>
    <ligand>
        <name>NADP(+)</name>
        <dbReference type="ChEBI" id="CHEBI:58349"/>
    </ligand>
</feature>
<feature type="binding site" evidence="1">
    <location>
        <position position="188"/>
    </location>
    <ligand>
        <name>NADP(+)</name>
        <dbReference type="ChEBI" id="CHEBI:58349"/>
    </ligand>
</feature>
<feature type="binding site" evidence="2">
    <location>
        <position position="343"/>
    </location>
    <ligand>
        <name>NADP(+)</name>
        <dbReference type="ChEBI" id="CHEBI:58349"/>
    </ligand>
</feature>
<feature type="modified residue" description="Phosphothreonine" evidence="10">
    <location>
        <position position="13"/>
    </location>
</feature>
<feature type="modified residue" description="Phosphoserine" evidence="9 11">
    <location>
        <position position="318"/>
    </location>
</feature>
<feature type="modified residue" description="Phosphoserine" evidence="11">
    <location>
        <position position="323"/>
    </location>
</feature>
<proteinExistence type="evidence at protein level"/>
<evidence type="ECO:0000250" key="1">
    <source>
        <dbReference type="UniProtKB" id="A0A080WMA9"/>
    </source>
</evidence>
<evidence type="ECO:0000250" key="2">
    <source>
        <dbReference type="UniProtKB" id="A0A179UL48"/>
    </source>
</evidence>
<evidence type="ECO:0000250" key="3">
    <source>
        <dbReference type="UniProtKB" id="P0A9Q9"/>
    </source>
</evidence>
<evidence type="ECO:0000250" key="4">
    <source>
        <dbReference type="UniProtKB" id="Q5ALM0"/>
    </source>
</evidence>
<evidence type="ECO:0000269" key="5">
    <source>
    </source>
</evidence>
<evidence type="ECO:0000269" key="6">
    <source>
    </source>
</evidence>
<evidence type="ECO:0000269" key="7">
    <source>
    </source>
</evidence>
<evidence type="ECO:0000305" key="8"/>
<evidence type="ECO:0007744" key="9">
    <source>
    </source>
</evidence>
<evidence type="ECO:0007744" key="10">
    <source>
    </source>
</evidence>
<evidence type="ECO:0007744" key="11">
    <source>
    </source>
</evidence>
<accession>P13663</accession>
<accession>D6VSD8</accession>
<dbReference type="EC" id="1.2.1.11" evidence="7"/>
<dbReference type="EMBL" id="X15649">
    <property type="protein sequence ID" value="CAA33675.1"/>
    <property type="molecule type" value="Genomic_DNA"/>
</dbReference>
<dbReference type="EMBL" id="Z50046">
    <property type="protein sequence ID" value="CAA90378.1"/>
    <property type="molecule type" value="Genomic_DNA"/>
</dbReference>
<dbReference type="EMBL" id="AY557698">
    <property type="protein sequence ID" value="AAS56024.1"/>
    <property type="molecule type" value="Genomic_DNA"/>
</dbReference>
<dbReference type="EMBL" id="BK006938">
    <property type="protein sequence ID" value="DAA11998.1"/>
    <property type="molecule type" value="Genomic_DNA"/>
</dbReference>
<dbReference type="PIR" id="JQ0198">
    <property type="entry name" value="JQ0198"/>
</dbReference>
<dbReference type="RefSeq" id="NP_010442.3">
    <property type="nucleotide sequence ID" value="NM_001180465.3"/>
</dbReference>
<dbReference type="SMR" id="P13663"/>
<dbReference type="BioGRID" id="32209">
    <property type="interactions" value="373"/>
</dbReference>
<dbReference type="DIP" id="DIP-5204N"/>
<dbReference type="FunCoup" id="P13663">
    <property type="interactions" value="458"/>
</dbReference>
<dbReference type="IntAct" id="P13663">
    <property type="interactions" value="25"/>
</dbReference>
<dbReference type="MINT" id="P13663"/>
<dbReference type="STRING" id="4932.YDR158W"/>
<dbReference type="iPTMnet" id="P13663"/>
<dbReference type="PaxDb" id="4932-YDR158W"/>
<dbReference type="PeptideAtlas" id="P13663"/>
<dbReference type="EnsemblFungi" id="YDR158W_mRNA">
    <property type="protein sequence ID" value="YDR158W"/>
    <property type="gene ID" value="YDR158W"/>
</dbReference>
<dbReference type="GeneID" id="851736"/>
<dbReference type="KEGG" id="sce:YDR158W"/>
<dbReference type="AGR" id="SGD:S000002565"/>
<dbReference type="SGD" id="S000002565">
    <property type="gene designation" value="HOM2"/>
</dbReference>
<dbReference type="VEuPathDB" id="FungiDB:YDR158W"/>
<dbReference type="eggNOG" id="KOG4777">
    <property type="taxonomic scope" value="Eukaryota"/>
</dbReference>
<dbReference type="HOGENOM" id="CLU_049966_1_0_1"/>
<dbReference type="InParanoid" id="P13663"/>
<dbReference type="OMA" id="CEEEMKM"/>
<dbReference type="OrthoDB" id="1894490at2759"/>
<dbReference type="BioCyc" id="YEAST:YDR158W-MONOMER"/>
<dbReference type="UniPathway" id="UPA00050">
    <property type="reaction ID" value="UER00463"/>
</dbReference>
<dbReference type="UniPathway" id="UPA00051">
    <property type="reaction ID" value="UER00464"/>
</dbReference>
<dbReference type="BioGRID-ORCS" id="851736">
    <property type="hits" value="1 hit in 10 CRISPR screens"/>
</dbReference>
<dbReference type="PRO" id="PR:P13663"/>
<dbReference type="Proteomes" id="UP000002311">
    <property type="component" value="Chromosome IV"/>
</dbReference>
<dbReference type="RNAct" id="P13663">
    <property type="molecule type" value="protein"/>
</dbReference>
<dbReference type="GO" id="GO:0005737">
    <property type="term" value="C:cytoplasm"/>
    <property type="evidence" value="ECO:0007005"/>
    <property type="project" value="SGD"/>
</dbReference>
<dbReference type="GO" id="GO:0005829">
    <property type="term" value="C:cytosol"/>
    <property type="evidence" value="ECO:0007669"/>
    <property type="project" value="UniProtKB-SubCell"/>
</dbReference>
<dbReference type="GO" id="GO:0005634">
    <property type="term" value="C:nucleus"/>
    <property type="evidence" value="ECO:0007005"/>
    <property type="project" value="SGD"/>
</dbReference>
<dbReference type="GO" id="GO:0005886">
    <property type="term" value="C:plasma membrane"/>
    <property type="evidence" value="ECO:0007005"/>
    <property type="project" value="SGD"/>
</dbReference>
<dbReference type="GO" id="GO:0004073">
    <property type="term" value="F:aspartate-semialdehyde dehydrogenase activity"/>
    <property type="evidence" value="ECO:0000314"/>
    <property type="project" value="SGD"/>
</dbReference>
<dbReference type="GO" id="GO:0051287">
    <property type="term" value="F:NAD binding"/>
    <property type="evidence" value="ECO:0007669"/>
    <property type="project" value="InterPro"/>
</dbReference>
<dbReference type="GO" id="GO:0050661">
    <property type="term" value="F:NADP binding"/>
    <property type="evidence" value="ECO:0007669"/>
    <property type="project" value="InterPro"/>
</dbReference>
<dbReference type="GO" id="GO:0046983">
    <property type="term" value="F:protein dimerization activity"/>
    <property type="evidence" value="ECO:0007669"/>
    <property type="project" value="InterPro"/>
</dbReference>
<dbReference type="GO" id="GO:0009090">
    <property type="term" value="P:homoserine biosynthetic process"/>
    <property type="evidence" value="ECO:0000315"/>
    <property type="project" value="SGD"/>
</dbReference>
<dbReference type="GO" id="GO:0009089">
    <property type="term" value="P:lysine biosynthetic process via diaminopimelate"/>
    <property type="evidence" value="ECO:0007669"/>
    <property type="project" value="UniProtKB-UniPathway"/>
</dbReference>
<dbReference type="GO" id="GO:0009086">
    <property type="term" value="P:methionine biosynthetic process"/>
    <property type="evidence" value="ECO:0000315"/>
    <property type="project" value="SGD"/>
</dbReference>
<dbReference type="GO" id="GO:0009088">
    <property type="term" value="P:threonine biosynthetic process"/>
    <property type="evidence" value="ECO:0000315"/>
    <property type="project" value="SGD"/>
</dbReference>
<dbReference type="CDD" id="cd18130">
    <property type="entry name" value="ASADH_C_arch_fung_like"/>
    <property type="match status" value="1"/>
</dbReference>
<dbReference type="CDD" id="cd02315">
    <property type="entry name" value="ScASADH_like_N"/>
    <property type="match status" value="1"/>
</dbReference>
<dbReference type="FunFam" id="3.40.50.720:FF:000200">
    <property type="entry name" value="Aspartate-semialdehyde dehydrogenase"/>
    <property type="match status" value="1"/>
</dbReference>
<dbReference type="FunFam" id="3.30.360.10:FF:000016">
    <property type="entry name" value="Probable aspartate-semialdehyde dehydrogenase"/>
    <property type="match status" value="1"/>
</dbReference>
<dbReference type="Gene3D" id="3.30.360.10">
    <property type="entry name" value="Dihydrodipicolinate Reductase, domain 2"/>
    <property type="match status" value="1"/>
</dbReference>
<dbReference type="Gene3D" id="3.40.50.720">
    <property type="entry name" value="NAD(P)-binding Rossmann-like Domain"/>
    <property type="match status" value="1"/>
</dbReference>
<dbReference type="HAMAP" id="MF_02121">
    <property type="entry name" value="ASADH"/>
    <property type="match status" value="1"/>
</dbReference>
<dbReference type="InterPro" id="IPR051823">
    <property type="entry name" value="ASADH-related"/>
</dbReference>
<dbReference type="InterPro" id="IPR000319">
    <property type="entry name" value="Asp-semialdehyde_DH_CS"/>
</dbReference>
<dbReference type="InterPro" id="IPR005676">
    <property type="entry name" value="Asp_semi-ald_DH_pep-lack"/>
</dbReference>
<dbReference type="InterPro" id="IPR012080">
    <property type="entry name" value="Asp_semialdehyde_DH"/>
</dbReference>
<dbReference type="InterPro" id="IPR036291">
    <property type="entry name" value="NAD(P)-bd_dom_sf"/>
</dbReference>
<dbReference type="InterPro" id="IPR000534">
    <property type="entry name" value="Semialdehyde_DH_NAD-bd"/>
</dbReference>
<dbReference type="InterPro" id="IPR012280">
    <property type="entry name" value="Semialdhyde_DH_dimer_dom"/>
</dbReference>
<dbReference type="NCBIfam" id="TIGR00978">
    <property type="entry name" value="asd_EA"/>
    <property type="match status" value="1"/>
</dbReference>
<dbReference type="NCBIfam" id="NF006416">
    <property type="entry name" value="PRK08664.1"/>
    <property type="match status" value="1"/>
</dbReference>
<dbReference type="PANTHER" id="PTHR46718">
    <property type="entry name" value="ASPARTATE-SEMIALDEHYDE DEHYDROGENASE"/>
    <property type="match status" value="1"/>
</dbReference>
<dbReference type="PANTHER" id="PTHR46718:SF1">
    <property type="entry name" value="ASPARTATE-SEMIALDEHYDE DEHYDROGENASE"/>
    <property type="match status" value="1"/>
</dbReference>
<dbReference type="Pfam" id="PF01118">
    <property type="entry name" value="Semialdhyde_dh"/>
    <property type="match status" value="1"/>
</dbReference>
<dbReference type="Pfam" id="PF02774">
    <property type="entry name" value="Semialdhyde_dhC"/>
    <property type="match status" value="1"/>
</dbReference>
<dbReference type="PIRSF" id="PIRSF000148">
    <property type="entry name" value="ASA_dh"/>
    <property type="match status" value="1"/>
</dbReference>
<dbReference type="SMART" id="SM00859">
    <property type="entry name" value="Semialdhyde_dh"/>
    <property type="match status" value="1"/>
</dbReference>
<dbReference type="SUPFAM" id="SSF55347">
    <property type="entry name" value="Glyceraldehyde-3-phosphate dehydrogenase-like, C-terminal domain"/>
    <property type="match status" value="1"/>
</dbReference>
<dbReference type="SUPFAM" id="SSF51735">
    <property type="entry name" value="NAD(P)-binding Rossmann-fold domains"/>
    <property type="match status" value="1"/>
</dbReference>
<dbReference type="PROSITE" id="PS01103">
    <property type="entry name" value="ASD"/>
    <property type="match status" value="1"/>
</dbReference>
<name>DHAS_YEAST</name>
<keyword id="KW-0028">Amino-acid biosynthesis</keyword>
<keyword id="KW-0963">Cytoplasm</keyword>
<keyword id="KW-0486">Methionine biosynthesis</keyword>
<keyword id="KW-0521">NADP</keyword>
<keyword id="KW-0539">Nucleus</keyword>
<keyword id="KW-0560">Oxidoreductase</keyword>
<keyword id="KW-0597">Phosphoprotein</keyword>
<keyword id="KW-1185">Reference proteome</keyword>
<keyword id="KW-0791">Threonine biosynthesis</keyword>
<gene>
    <name type="primary">HOM2</name>
    <name type="ordered locus">YDR158W</name>
    <name type="ORF">YD8358.12</name>
</gene>
<sequence>MAGKKIAGVLGATGSVGQRFILLLANHPHFELKVLGASSRSAGKKYVDAVNWKQTDLLPESATDIIVSECKSEFFKECDIVFSGLDADYAGAIEKEFMEAGIAIVSNAKNYRREQDVPLIVPVVNPEHLDIVAQKLDTAKAQGKPRPGFIICISNCSTAGLVAPLKPLIEKFGPIDALTTTTLQAISGAGFSPGVPGIDILDNIIPYIGGEEDKMEWETKKILAPLAEDKTHVKLLTPEEIKVSAQCNRVAVSDGHTECISLRFKNRPAPSVEQVKTCLKEYVCDAYKLGCHSAPKQTIHVLEQPDRPQPRLDRNRDSGYGVSVGRIREDPLLDFKMVVLSHNTIIGAAGSGVLIAEILLARNLI</sequence>
<reference key="1">
    <citation type="journal article" date="1989" name="Mol. Gen. Genet.">
        <title>Structure of the HOM2 gene of Saccharomyces cerevisiae and regulation of its expression.</title>
        <authorList>
            <person name="Thomas D."/>
            <person name="Surdin-Kerjan Y."/>
        </authorList>
    </citation>
    <scope>NUCLEOTIDE SEQUENCE [GENOMIC DNA]</scope>
    <source>
        <strain>CC494-7D</strain>
    </source>
</reference>
<reference key="2">
    <citation type="journal article" date="1997" name="Nature">
        <title>The nucleotide sequence of Saccharomyces cerevisiae chromosome IV.</title>
        <authorList>
            <person name="Jacq C."/>
            <person name="Alt-Moerbe J."/>
            <person name="Andre B."/>
            <person name="Arnold W."/>
            <person name="Bahr A."/>
            <person name="Ballesta J.P.G."/>
            <person name="Bargues M."/>
            <person name="Baron L."/>
            <person name="Becker A."/>
            <person name="Biteau N."/>
            <person name="Bloecker H."/>
            <person name="Blugeon C."/>
            <person name="Boskovic J."/>
            <person name="Brandt P."/>
            <person name="Brueckner M."/>
            <person name="Buitrago M.J."/>
            <person name="Coster F."/>
            <person name="Delaveau T."/>
            <person name="del Rey F."/>
            <person name="Dujon B."/>
            <person name="Eide L.G."/>
            <person name="Garcia-Cantalejo J.M."/>
            <person name="Goffeau A."/>
            <person name="Gomez-Peris A."/>
            <person name="Granotier C."/>
            <person name="Hanemann V."/>
            <person name="Hankeln T."/>
            <person name="Hoheisel J.D."/>
            <person name="Jaeger W."/>
            <person name="Jimenez A."/>
            <person name="Jonniaux J.-L."/>
            <person name="Kraemer C."/>
            <person name="Kuester H."/>
            <person name="Laamanen P."/>
            <person name="Legros Y."/>
            <person name="Louis E.J."/>
            <person name="Moeller-Rieker S."/>
            <person name="Monnet A."/>
            <person name="Moro M."/>
            <person name="Mueller-Auer S."/>
            <person name="Nussbaumer B."/>
            <person name="Paricio N."/>
            <person name="Paulin L."/>
            <person name="Perea J."/>
            <person name="Perez-Alonso M."/>
            <person name="Perez-Ortin J.E."/>
            <person name="Pohl T.M."/>
            <person name="Prydz H."/>
            <person name="Purnelle B."/>
            <person name="Rasmussen S.W."/>
            <person name="Remacha M.A."/>
            <person name="Revuelta J.L."/>
            <person name="Rieger M."/>
            <person name="Salom D."/>
            <person name="Saluz H.P."/>
            <person name="Saiz J.E."/>
            <person name="Saren A.-M."/>
            <person name="Schaefer M."/>
            <person name="Scharfe M."/>
            <person name="Schmidt E.R."/>
            <person name="Schneider C."/>
            <person name="Scholler P."/>
            <person name="Schwarz S."/>
            <person name="Soler-Mira A."/>
            <person name="Urrestarazu L.A."/>
            <person name="Verhasselt P."/>
            <person name="Vissers S."/>
            <person name="Voet M."/>
            <person name="Volckaert G."/>
            <person name="Wagner G."/>
            <person name="Wambutt R."/>
            <person name="Wedler E."/>
            <person name="Wedler H."/>
            <person name="Woelfl S."/>
            <person name="Harris D.E."/>
            <person name="Bowman S."/>
            <person name="Brown D."/>
            <person name="Churcher C.M."/>
            <person name="Connor R."/>
            <person name="Dedman K."/>
            <person name="Gentles S."/>
            <person name="Hamlin N."/>
            <person name="Hunt S."/>
            <person name="Jones L."/>
            <person name="McDonald S."/>
            <person name="Murphy L.D."/>
            <person name="Niblett D."/>
            <person name="Odell C."/>
            <person name="Oliver K."/>
            <person name="Rajandream M.A."/>
            <person name="Richards C."/>
            <person name="Shore L."/>
            <person name="Walsh S.V."/>
            <person name="Barrell B.G."/>
            <person name="Dietrich F.S."/>
            <person name="Mulligan J.T."/>
            <person name="Allen E."/>
            <person name="Araujo R."/>
            <person name="Aviles E."/>
            <person name="Berno A."/>
            <person name="Carpenter J."/>
            <person name="Chen E."/>
            <person name="Cherry J.M."/>
            <person name="Chung E."/>
            <person name="Duncan M."/>
            <person name="Hunicke-Smith S."/>
            <person name="Hyman R.W."/>
            <person name="Komp C."/>
            <person name="Lashkari D."/>
            <person name="Lew H."/>
            <person name="Lin D."/>
            <person name="Mosedale D."/>
            <person name="Nakahara K."/>
            <person name="Namath A."/>
            <person name="Oefner P."/>
            <person name="Oh C."/>
            <person name="Petel F.X."/>
            <person name="Roberts D."/>
            <person name="Schramm S."/>
            <person name="Schroeder M."/>
            <person name="Shogren T."/>
            <person name="Shroff N."/>
            <person name="Winant A."/>
            <person name="Yelton M.A."/>
            <person name="Botstein D."/>
            <person name="Davis R.W."/>
            <person name="Johnston M."/>
            <person name="Andrews S."/>
            <person name="Brinkman R."/>
            <person name="Cooper J."/>
            <person name="Ding H."/>
            <person name="Du Z."/>
            <person name="Favello A."/>
            <person name="Fulton L."/>
            <person name="Gattung S."/>
            <person name="Greco T."/>
            <person name="Hallsworth K."/>
            <person name="Hawkins J."/>
            <person name="Hillier L.W."/>
            <person name="Jier M."/>
            <person name="Johnson D."/>
            <person name="Johnston L."/>
            <person name="Kirsten J."/>
            <person name="Kucaba T."/>
            <person name="Langston Y."/>
            <person name="Latreille P."/>
            <person name="Le T."/>
            <person name="Mardis E."/>
            <person name="Menezes S."/>
            <person name="Miller N."/>
            <person name="Nhan M."/>
            <person name="Pauley A."/>
            <person name="Peluso D."/>
            <person name="Rifkin L."/>
            <person name="Riles L."/>
            <person name="Taich A."/>
            <person name="Trevaskis E."/>
            <person name="Vignati D."/>
            <person name="Wilcox L."/>
            <person name="Wohldman P."/>
            <person name="Vaudin M."/>
            <person name="Wilson R."/>
            <person name="Waterston R."/>
            <person name="Albermann K."/>
            <person name="Hani J."/>
            <person name="Heumann K."/>
            <person name="Kleine K."/>
            <person name="Mewes H.-W."/>
            <person name="Zollner A."/>
            <person name="Zaccaria P."/>
        </authorList>
    </citation>
    <scope>NUCLEOTIDE SEQUENCE [LARGE SCALE GENOMIC DNA]</scope>
    <source>
        <strain>ATCC 204508 / S288c</strain>
    </source>
</reference>
<reference key="3">
    <citation type="journal article" date="2014" name="G3 (Bethesda)">
        <title>The reference genome sequence of Saccharomyces cerevisiae: Then and now.</title>
        <authorList>
            <person name="Engel S.R."/>
            <person name="Dietrich F.S."/>
            <person name="Fisk D.G."/>
            <person name="Binkley G."/>
            <person name="Balakrishnan R."/>
            <person name="Costanzo M.C."/>
            <person name="Dwight S.S."/>
            <person name="Hitz B.C."/>
            <person name="Karra K."/>
            <person name="Nash R.S."/>
            <person name="Weng S."/>
            <person name="Wong E.D."/>
            <person name="Lloyd P."/>
            <person name="Skrzypek M.S."/>
            <person name="Miyasato S.R."/>
            <person name="Simison M."/>
            <person name="Cherry J.M."/>
        </authorList>
    </citation>
    <scope>GENOME REANNOTATION</scope>
    <source>
        <strain>ATCC 204508 / S288c</strain>
    </source>
</reference>
<reference key="4">
    <citation type="journal article" date="2007" name="Genome Res.">
        <title>Approaching a complete repository of sequence-verified protein-encoding clones for Saccharomyces cerevisiae.</title>
        <authorList>
            <person name="Hu Y."/>
            <person name="Rolfs A."/>
            <person name="Bhullar B."/>
            <person name="Murthy T.V.S."/>
            <person name="Zhu C."/>
            <person name="Berger M.F."/>
            <person name="Camargo A.A."/>
            <person name="Kelley F."/>
            <person name="McCarron S."/>
            <person name="Jepson D."/>
            <person name="Richardson A."/>
            <person name="Raphael J."/>
            <person name="Moreira D."/>
            <person name="Taycher E."/>
            <person name="Zuo D."/>
            <person name="Mohr S."/>
            <person name="Kane M.F."/>
            <person name="Williamson J."/>
            <person name="Simpson A.J.G."/>
            <person name="Bulyk M.L."/>
            <person name="Harlow E."/>
            <person name="Marsischky G."/>
            <person name="Kolodner R.D."/>
            <person name="LaBaer J."/>
        </authorList>
    </citation>
    <scope>NUCLEOTIDE SEQUENCE [GENOMIC DNA]</scope>
    <source>
        <strain>ATCC 204508 / S288c</strain>
    </source>
</reference>
<reference key="5">
    <citation type="journal article" date="1973" name="Biochemistry">
        <title>Purification and characterization of aspartic -semialdehyde dehydrogenase from yeast and purification of an isozyme of glyceraldehyde-3-phosphate dehydrogenase.</title>
        <authorList>
            <person name="Holland M.J."/>
            <person name="Westhead E.W."/>
        </authorList>
    </citation>
    <scope>FUNCTION</scope>
    <scope>CATALYTIC ACTIVITY</scope>
    <scope>BIOPHYSICOCHEMICAL PROPERTIES</scope>
    <scope>PATHWAY</scope>
    <scope>SUBUNIT</scope>
</reference>
<reference key="6">
    <citation type="journal article" date="2003" name="Nature">
        <title>Global analysis of protein localization in budding yeast.</title>
        <authorList>
            <person name="Huh W.-K."/>
            <person name="Falvo J.V."/>
            <person name="Gerke L.C."/>
            <person name="Carroll A.S."/>
            <person name="Howson R.W."/>
            <person name="Weissman J.S."/>
            <person name="O'Shea E.K."/>
        </authorList>
    </citation>
    <scope>SUBCELLULAR LOCATION [LARGE SCALE ANALYSIS]</scope>
</reference>
<reference key="7">
    <citation type="journal article" date="2003" name="Nature">
        <title>Global analysis of protein expression in yeast.</title>
        <authorList>
            <person name="Ghaemmaghami S."/>
            <person name="Huh W.-K."/>
            <person name="Bower K."/>
            <person name="Howson R.W."/>
            <person name="Belle A."/>
            <person name="Dephoure N."/>
            <person name="O'Shea E.K."/>
            <person name="Weissman J.S."/>
        </authorList>
    </citation>
    <scope>LEVEL OF PROTEIN EXPRESSION [LARGE SCALE ANALYSIS]</scope>
</reference>
<reference key="8">
    <citation type="journal article" date="2007" name="J. Proteome Res.">
        <title>Large-scale phosphorylation analysis of alpha-factor-arrested Saccharomyces cerevisiae.</title>
        <authorList>
            <person name="Li X."/>
            <person name="Gerber S.A."/>
            <person name="Rudner A.D."/>
            <person name="Beausoleil S.A."/>
            <person name="Haas W."/>
            <person name="Villen J."/>
            <person name="Elias J.E."/>
            <person name="Gygi S.P."/>
        </authorList>
    </citation>
    <scope>PHOSPHORYLATION [LARGE SCALE ANALYSIS] AT SER-318</scope>
    <scope>IDENTIFICATION BY MASS SPECTROMETRY [LARGE SCALE ANALYSIS]</scope>
    <source>
        <strain>ADR376</strain>
    </source>
</reference>
<reference key="9">
    <citation type="journal article" date="2008" name="Mol. Cell. Proteomics">
        <title>A multidimensional chromatography technology for in-depth phosphoproteome analysis.</title>
        <authorList>
            <person name="Albuquerque C.P."/>
            <person name="Smolka M.B."/>
            <person name="Payne S.H."/>
            <person name="Bafna V."/>
            <person name="Eng J."/>
            <person name="Zhou H."/>
        </authorList>
    </citation>
    <scope>PHOSPHORYLATION [LARGE SCALE ANALYSIS] AT THR-13</scope>
    <scope>IDENTIFICATION BY MASS SPECTROMETRY [LARGE SCALE ANALYSIS]</scope>
</reference>
<reference key="10">
    <citation type="journal article" date="2009" name="Science">
        <title>Global analysis of Cdk1 substrate phosphorylation sites provides insights into evolution.</title>
        <authorList>
            <person name="Holt L.J."/>
            <person name="Tuch B.B."/>
            <person name="Villen J."/>
            <person name="Johnson A.D."/>
            <person name="Gygi S.P."/>
            <person name="Morgan D.O."/>
        </authorList>
    </citation>
    <scope>PHOSPHORYLATION [LARGE SCALE ANALYSIS] AT SER-318 AND SER-323</scope>
    <scope>IDENTIFICATION BY MASS SPECTROMETRY [LARGE SCALE ANALYSIS]</scope>
</reference>
<reference key="11">
    <citation type="journal article" date="2012" name="Proc. Natl. Acad. Sci. U.S.A.">
        <title>N-terminal acetylome analyses and functional insights of the N-terminal acetyltransferase NatB.</title>
        <authorList>
            <person name="Van Damme P."/>
            <person name="Lasa M."/>
            <person name="Polevoda B."/>
            <person name="Gazquez C."/>
            <person name="Elosegui-Artola A."/>
            <person name="Kim D.S."/>
            <person name="De Juan-Pardo E."/>
            <person name="Demeyer K."/>
            <person name="Hole K."/>
            <person name="Larrea E."/>
            <person name="Timmerman E."/>
            <person name="Prieto J."/>
            <person name="Arnesen T."/>
            <person name="Sherman F."/>
            <person name="Gevaert K."/>
            <person name="Aldabe R."/>
        </authorList>
    </citation>
    <scope>IDENTIFICATION BY MASS SPECTROMETRY [LARGE SCALE ANALYSIS]</scope>
</reference>